<keyword id="KW-0997">Cell inner membrane</keyword>
<keyword id="KW-1003">Cell membrane</keyword>
<keyword id="KW-0472">Membrane</keyword>
<keyword id="KW-0812">Transmembrane</keyword>
<keyword id="KW-1133">Transmembrane helix</keyword>
<feature type="chain" id="PRO_0000278050" description="Inner membrane-spanning protein YciB">
    <location>
        <begin position="1"/>
        <end position="180"/>
    </location>
</feature>
<feature type="transmembrane region" description="Helical" evidence="1">
    <location>
        <begin position="4"/>
        <end position="24"/>
    </location>
</feature>
<feature type="transmembrane region" description="Helical" evidence="1">
    <location>
        <begin position="25"/>
        <end position="45"/>
    </location>
</feature>
<feature type="transmembrane region" description="Helical" evidence="1">
    <location>
        <begin position="52"/>
        <end position="72"/>
    </location>
</feature>
<feature type="transmembrane region" description="Helical" evidence="1">
    <location>
        <begin position="76"/>
        <end position="96"/>
    </location>
</feature>
<feature type="transmembrane region" description="Helical" evidence="1">
    <location>
        <begin position="118"/>
        <end position="138"/>
    </location>
</feature>
<feature type="transmembrane region" description="Helical" evidence="1">
    <location>
        <begin position="150"/>
        <end position="170"/>
    </location>
</feature>
<organism>
    <name type="scientific">Rickettsia bellii (strain RML369-C)</name>
    <dbReference type="NCBI Taxonomy" id="336407"/>
    <lineage>
        <taxon>Bacteria</taxon>
        <taxon>Pseudomonadati</taxon>
        <taxon>Pseudomonadota</taxon>
        <taxon>Alphaproteobacteria</taxon>
        <taxon>Rickettsiales</taxon>
        <taxon>Rickettsiaceae</taxon>
        <taxon>Rickettsieae</taxon>
        <taxon>Rickettsia</taxon>
        <taxon>belli group</taxon>
    </lineage>
</organism>
<name>YCIB_RICBR</name>
<reference key="1">
    <citation type="journal article" date="2006" name="PLoS Genet.">
        <title>Genome sequence of Rickettsia bellii illuminates the role of amoebae in gene exchanges between intracellular pathogens.</title>
        <authorList>
            <person name="Ogata H."/>
            <person name="La Scola B."/>
            <person name="Audic S."/>
            <person name="Renesto P."/>
            <person name="Blanc G."/>
            <person name="Robert C."/>
            <person name="Fournier P.-E."/>
            <person name="Claverie J.-M."/>
            <person name="Raoult D."/>
        </authorList>
    </citation>
    <scope>NUCLEOTIDE SEQUENCE [LARGE SCALE GENOMIC DNA]</scope>
    <source>
        <strain>RML369-C</strain>
    </source>
</reference>
<protein>
    <recommendedName>
        <fullName evidence="1">Inner membrane-spanning protein YciB</fullName>
    </recommendedName>
</protein>
<proteinExistence type="inferred from homology"/>
<accession>Q1RJQ9</accession>
<evidence type="ECO:0000255" key="1">
    <source>
        <dbReference type="HAMAP-Rule" id="MF_00189"/>
    </source>
</evidence>
<comment type="function">
    <text evidence="1">Plays a role in cell envelope biogenesis, maintenance of cell envelope integrity and membrane homeostasis.</text>
</comment>
<comment type="subcellular location">
    <subcellularLocation>
        <location evidence="1">Cell inner membrane</location>
        <topology evidence="1">Multi-pass membrane protein</topology>
    </subcellularLocation>
</comment>
<comment type="similarity">
    <text evidence="1">Belongs to the YciB family.</text>
</comment>
<dbReference type="EMBL" id="CP000087">
    <property type="protein sequence ID" value="ABE04405.1"/>
    <property type="molecule type" value="Genomic_DNA"/>
</dbReference>
<dbReference type="RefSeq" id="WP_011477016.1">
    <property type="nucleotide sequence ID" value="NC_007940.1"/>
</dbReference>
<dbReference type="SMR" id="Q1RJQ9"/>
<dbReference type="KEGG" id="rbe:RBE_0324"/>
<dbReference type="eggNOG" id="COG2917">
    <property type="taxonomic scope" value="Bacteria"/>
</dbReference>
<dbReference type="HOGENOM" id="CLU_089554_1_1_5"/>
<dbReference type="OrthoDB" id="9788219at2"/>
<dbReference type="Proteomes" id="UP000001951">
    <property type="component" value="Chromosome"/>
</dbReference>
<dbReference type="GO" id="GO:0005886">
    <property type="term" value="C:plasma membrane"/>
    <property type="evidence" value="ECO:0007669"/>
    <property type="project" value="UniProtKB-SubCell"/>
</dbReference>
<dbReference type="HAMAP" id="MF_00189">
    <property type="entry name" value="YciB"/>
    <property type="match status" value="1"/>
</dbReference>
<dbReference type="InterPro" id="IPR006008">
    <property type="entry name" value="YciB"/>
</dbReference>
<dbReference type="NCBIfam" id="TIGR00997">
    <property type="entry name" value="ispZ"/>
    <property type="match status" value="1"/>
</dbReference>
<dbReference type="NCBIfam" id="NF001323">
    <property type="entry name" value="PRK00259.1-1"/>
    <property type="match status" value="1"/>
</dbReference>
<dbReference type="PANTHER" id="PTHR36917:SF1">
    <property type="entry name" value="INNER MEMBRANE-SPANNING PROTEIN YCIB"/>
    <property type="match status" value="1"/>
</dbReference>
<dbReference type="PANTHER" id="PTHR36917">
    <property type="entry name" value="INTRACELLULAR SEPTATION PROTEIN A-RELATED"/>
    <property type="match status" value="1"/>
</dbReference>
<dbReference type="Pfam" id="PF04279">
    <property type="entry name" value="IspA"/>
    <property type="match status" value="1"/>
</dbReference>
<sequence>MFKLLSEIGPVVAFFAGFFYGGGIQSATLYMLITSVICITLCYIIDKKVSRLSIISTAVLLVSGIITLISGDSMYIKIKPTILYVIFGIIFLTSGIKKNPFIKYALESIIRLKEESWITLSYRTATFFFFMAIVNEIVWRNFPDETWVKFKVFGVVPITFVFILLQLPLLLKNKLPDSKI</sequence>
<gene>
    <name evidence="1" type="primary">yciB</name>
    <name type="ordered locus">RBE_0324</name>
</gene>